<organism>
    <name type="scientific">Chlamydia trachomatis serovar L2b (strain UCH-1/proctitis)</name>
    <dbReference type="NCBI Taxonomy" id="471473"/>
    <lineage>
        <taxon>Bacteria</taxon>
        <taxon>Pseudomonadati</taxon>
        <taxon>Chlamydiota</taxon>
        <taxon>Chlamydiia</taxon>
        <taxon>Chlamydiales</taxon>
        <taxon>Chlamydiaceae</taxon>
        <taxon>Chlamydia/Chlamydophila group</taxon>
        <taxon>Chlamydia</taxon>
    </lineage>
</organism>
<dbReference type="EMBL" id="AM884177">
    <property type="protein sequence ID" value="CAP07173.1"/>
    <property type="molecule type" value="Genomic_DNA"/>
</dbReference>
<dbReference type="RefSeq" id="WP_009871883.1">
    <property type="nucleotide sequence ID" value="NC_010280.2"/>
</dbReference>
<dbReference type="SMR" id="B0BCF8"/>
<dbReference type="GeneID" id="93065358"/>
<dbReference type="KEGG" id="ctl:CTLon_0776"/>
<dbReference type="HOGENOM" id="CLU_073626_1_0_0"/>
<dbReference type="Proteomes" id="UP001154401">
    <property type="component" value="Chromosome"/>
</dbReference>
<dbReference type="GO" id="GO:0022627">
    <property type="term" value="C:cytosolic small ribosomal subunit"/>
    <property type="evidence" value="ECO:0007669"/>
    <property type="project" value="TreeGrafter"/>
</dbReference>
<dbReference type="GO" id="GO:0019843">
    <property type="term" value="F:rRNA binding"/>
    <property type="evidence" value="ECO:0007669"/>
    <property type="project" value="UniProtKB-UniRule"/>
</dbReference>
<dbReference type="GO" id="GO:0003735">
    <property type="term" value="F:structural constituent of ribosome"/>
    <property type="evidence" value="ECO:0007669"/>
    <property type="project" value="InterPro"/>
</dbReference>
<dbReference type="GO" id="GO:0006412">
    <property type="term" value="P:translation"/>
    <property type="evidence" value="ECO:0007669"/>
    <property type="project" value="UniProtKB-UniRule"/>
</dbReference>
<dbReference type="CDD" id="cd00364">
    <property type="entry name" value="Ribosomal_uS17"/>
    <property type="match status" value="1"/>
</dbReference>
<dbReference type="FunFam" id="2.40.50.140:FF:000462">
    <property type="entry name" value="30S ribosomal protein S17"/>
    <property type="match status" value="1"/>
</dbReference>
<dbReference type="Gene3D" id="2.40.50.140">
    <property type="entry name" value="Nucleic acid-binding proteins"/>
    <property type="match status" value="1"/>
</dbReference>
<dbReference type="HAMAP" id="MF_01345_B">
    <property type="entry name" value="Ribosomal_uS17_B"/>
    <property type="match status" value="1"/>
</dbReference>
<dbReference type="InterPro" id="IPR012340">
    <property type="entry name" value="NA-bd_OB-fold"/>
</dbReference>
<dbReference type="InterPro" id="IPR000266">
    <property type="entry name" value="Ribosomal_uS17"/>
</dbReference>
<dbReference type="InterPro" id="IPR019984">
    <property type="entry name" value="Ribosomal_uS17_bact/chlr"/>
</dbReference>
<dbReference type="InterPro" id="IPR019979">
    <property type="entry name" value="Ribosomal_uS17_CS"/>
</dbReference>
<dbReference type="NCBIfam" id="NF004123">
    <property type="entry name" value="PRK05610.1"/>
    <property type="match status" value="1"/>
</dbReference>
<dbReference type="NCBIfam" id="TIGR03635">
    <property type="entry name" value="uS17_bact"/>
    <property type="match status" value="1"/>
</dbReference>
<dbReference type="PANTHER" id="PTHR10744">
    <property type="entry name" value="40S RIBOSOMAL PROTEIN S11 FAMILY MEMBER"/>
    <property type="match status" value="1"/>
</dbReference>
<dbReference type="PANTHER" id="PTHR10744:SF1">
    <property type="entry name" value="SMALL RIBOSOMAL SUBUNIT PROTEIN US17M"/>
    <property type="match status" value="1"/>
</dbReference>
<dbReference type="Pfam" id="PF00366">
    <property type="entry name" value="Ribosomal_S17"/>
    <property type="match status" value="1"/>
</dbReference>
<dbReference type="PRINTS" id="PR00973">
    <property type="entry name" value="RIBOSOMALS17"/>
</dbReference>
<dbReference type="SUPFAM" id="SSF50249">
    <property type="entry name" value="Nucleic acid-binding proteins"/>
    <property type="match status" value="1"/>
</dbReference>
<dbReference type="PROSITE" id="PS00056">
    <property type="entry name" value="RIBOSOMAL_S17"/>
    <property type="match status" value="1"/>
</dbReference>
<comment type="function">
    <text evidence="1">One of the primary rRNA binding proteins, it binds specifically to the 5'-end of 16S ribosomal RNA.</text>
</comment>
<comment type="subunit">
    <text evidence="1">Part of the 30S ribosomal subunit.</text>
</comment>
<comment type="similarity">
    <text evidence="1">Belongs to the universal ribosomal protein uS17 family.</text>
</comment>
<reference key="1">
    <citation type="journal article" date="2008" name="Genome Res.">
        <title>Chlamydia trachomatis: genome sequence analysis of lymphogranuloma venereum isolates.</title>
        <authorList>
            <person name="Thomson N.R."/>
            <person name="Holden M.T.G."/>
            <person name="Carder C."/>
            <person name="Lennard N."/>
            <person name="Lockey S.J."/>
            <person name="Marsh P."/>
            <person name="Skipp P."/>
            <person name="O'Connor C.D."/>
            <person name="Goodhead I."/>
            <person name="Norbertzcak H."/>
            <person name="Harris B."/>
            <person name="Ormond D."/>
            <person name="Rance R."/>
            <person name="Quail M.A."/>
            <person name="Parkhill J."/>
            <person name="Stephens R.S."/>
            <person name="Clarke I.N."/>
        </authorList>
    </citation>
    <scope>NUCLEOTIDE SEQUENCE [LARGE SCALE GENOMIC DNA]</scope>
    <source>
        <strain>UCH-1/proctitis</strain>
    </source>
</reference>
<feature type="chain" id="PRO_1000143239" description="Small ribosomal subunit protein uS17">
    <location>
        <begin position="1"/>
        <end position="83"/>
    </location>
</feature>
<protein>
    <recommendedName>
        <fullName evidence="1">Small ribosomal subunit protein uS17</fullName>
    </recommendedName>
    <alternativeName>
        <fullName evidence="2">30S ribosomal protein S17</fullName>
    </alternativeName>
</protein>
<evidence type="ECO:0000255" key="1">
    <source>
        <dbReference type="HAMAP-Rule" id="MF_01345"/>
    </source>
</evidence>
<evidence type="ECO:0000305" key="2"/>
<accession>B0BCF8</accession>
<sequence length="83" mass="9645">MASDVRGRRKTKIGVVVSSKMEKTVVVRVERVYSHPQYAKVVRDSSKYYAHNELDVKEGDTVRIQETRPLSKTKRWRVVGRVN</sequence>
<proteinExistence type="inferred from homology"/>
<name>RS17_CHLTB</name>
<keyword id="KW-0687">Ribonucleoprotein</keyword>
<keyword id="KW-0689">Ribosomal protein</keyword>
<keyword id="KW-0694">RNA-binding</keyword>
<keyword id="KW-0699">rRNA-binding</keyword>
<gene>
    <name evidence="1" type="primary">rpsQ</name>
    <name type="ordered locus">CTLon_0776</name>
</gene>